<comment type="function">
    <text evidence="1">Catalyzes the decarboxylation of four acetate groups of uroporphyrinogen-III to yield coproporphyrinogen-III.</text>
</comment>
<comment type="catalytic activity">
    <reaction evidence="1">
        <text>uroporphyrinogen III + 4 H(+) = coproporphyrinogen III + 4 CO2</text>
        <dbReference type="Rhea" id="RHEA:19865"/>
        <dbReference type="ChEBI" id="CHEBI:15378"/>
        <dbReference type="ChEBI" id="CHEBI:16526"/>
        <dbReference type="ChEBI" id="CHEBI:57308"/>
        <dbReference type="ChEBI" id="CHEBI:57309"/>
        <dbReference type="EC" id="4.1.1.37"/>
    </reaction>
</comment>
<comment type="pathway">
    <text evidence="1">Porphyrin-containing compound metabolism; protoporphyrin-IX biosynthesis; coproporphyrinogen-III from 5-aminolevulinate: step 4/4.</text>
</comment>
<comment type="subunit">
    <text evidence="1">Homodimer.</text>
</comment>
<comment type="subcellular location">
    <subcellularLocation>
        <location evidence="1">Cytoplasm</location>
    </subcellularLocation>
</comment>
<comment type="similarity">
    <text evidence="1">Belongs to the uroporphyrinogen decarboxylase family.</text>
</comment>
<evidence type="ECO:0000255" key="1">
    <source>
        <dbReference type="HAMAP-Rule" id="MF_00218"/>
    </source>
</evidence>
<feature type="chain" id="PRO_0000325673" description="Uroporphyrinogen decarboxylase">
    <location>
        <begin position="1"/>
        <end position="369"/>
    </location>
</feature>
<feature type="binding site" evidence="1">
    <location>
        <begin position="28"/>
        <end position="32"/>
    </location>
    <ligand>
        <name>substrate</name>
    </ligand>
</feature>
<feature type="binding site" evidence="1">
    <location>
        <position position="78"/>
    </location>
    <ligand>
        <name>substrate</name>
    </ligand>
</feature>
<feature type="binding site" evidence="1">
    <location>
        <position position="154"/>
    </location>
    <ligand>
        <name>substrate</name>
    </ligand>
</feature>
<feature type="binding site" evidence="1">
    <location>
        <position position="209"/>
    </location>
    <ligand>
        <name>substrate</name>
    </ligand>
</feature>
<feature type="binding site" evidence="1">
    <location>
        <position position="339"/>
    </location>
    <ligand>
        <name>substrate</name>
    </ligand>
</feature>
<feature type="site" description="Transition state stabilizer" evidence="1">
    <location>
        <position position="78"/>
    </location>
</feature>
<protein>
    <recommendedName>
        <fullName evidence="1">Uroporphyrinogen decarboxylase</fullName>
        <shortName evidence="1">UPD</shortName>
        <shortName evidence="1">URO-D</shortName>
        <ecNumber evidence="1">4.1.1.37</ecNumber>
    </recommendedName>
</protein>
<sequence>MFAPLQNDTFLRACLRQATDHTPVWLMRQAGRYLPEYKATRAKAGSFMGLATNTDYATEVTLQPLERYPLDAAILFSDILTVPDAMGLGLSFALGEGPRFATPVRDEAAVNKLEVPDMNKLRYVFDAVTSIRKALGGRVPLIGFSGSPWTLACYMVEGSGSDDYRLVKTMLYQRPDLMHKMLAINADAVALYLNAQIEAGAQAVMIFDSWGGVLADAAFHTFSLAYTARVLSQLKREHKGVTIPRLVFTKGGGQWLESMKQLDCEVLGLDWTVNLAKARALVGENGPNAKALQGNLDPNVLFANPAQIEAEVAAVLNSFGAPHTDLTQTGPTQIFNLGHGISQHTPPESVEVLVRAVHAHSRSLRKQQG</sequence>
<reference key="1">
    <citation type="journal article" date="2009" name="Environ. Microbiol.">
        <title>The genome of Polaromonas naphthalenivorans strain CJ2, isolated from coal tar-contaminated sediment, reveals physiological and metabolic versatility and evolution through extensive horizontal gene transfer.</title>
        <authorList>
            <person name="Yagi J.M."/>
            <person name="Sims D."/>
            <person name="Brettin T."/>
            <person name="Bruce D."/>
            <person name="Madsen E.L."/>
        </authorList>
    </citation>
    <scope>NUCLEOTIDE SEQUENCE [LARGE SCALE GENOMIC DNA]</scope>
    <source>
        <strain>CJ2</strain>
    </source>
</reference>
<organism>
    <name type="scientific">Polaromonas naphthalenivorans (strain CJ2)</name>
    <dbReference type="NCBI Taxonomy" id="365044"/>
    <lineage>
        <taxon>Bacteria</taxon>
        <taxon>Pseudomonadati</taxon>
        <taxon>Pseudomonadota</taxon>
        <taxon>Betaproteobacteria</taxon>
        <taxon>Burkholderiales</taxon>
        <taxon>Comamonadaceae</taxon>
        <taxon>Polaromonas</taxon>
    </lineage>
</organism>
<proteinExistence type="inferred from homology"/>
<dbReference type="EC" id="4.1.1.37" evidence="1"/>
<dbReference type="EMBL" id="CP000529">
    <property type="protein sequence ID" value="ABM35686.1"/>
    <property type="molecule type" value="Genomic_DNA"/>
</dbReference>
<dbReference type="RefSeq" id="WP_011799789.1">
    <property type="nucleotide sequence ID" value="NC_008781.1"/>
</dbReference>
<dbReference type="SMR" id="A1VJ58"/>
<dbReference type="STRING" id="365044.Pnap_0363"/>
<dbReference type="KEGG" id="pna:Pnap_0363"/>
<dbReference type="eggNOG" id="COG0407">
    <property type="taxonomic scope" value="Bacteria"/>
</dbReference>
<dbReference type="HOGENOM" id="CLU_040933_0_0_4"/>
<dbReference type="OrthoDB" id="9806656at2"/>
<dbReference type="UniPathway" id="UPA00251">
    <property type="reaction ID" value="UER00321"/>
</dbReference>
<dbReference type="Proteomes" id="UP000000644">
    <property type="component" value="Chromosome"/>
</dbReference>
<dbReference type="GO" id="GO:0005829">
    <property type="term" value="C:cytosol"/>
    <property type="evidence" value="ECO:0007669"/>
    <property type="project" value="TreeGrafter"/>
</dbReference>
<dbReference type="GO" id="GO:0004853">
    <property type="term" value="F:uroporphyrinogen decarboxylase activity"/>
    <property type="evidence" value="ECO:0007669"/>
    <property type="project" value="UniProtKB-UniRule"/>
</dbReference>
<dbReference type="GO" id="GO:0019353">
    <property type="term" value="P:protoporphyrinogen IX biosynthetic process from glutamate"/>
    <property type="evidence" value="ECO:0007669"/>
    <property type="project" value="TreeGrafter"/>
</dbReference>
<dbReference type="CDD" id="cd00717">
    <property type="entry name" value="URO-D"/>
    <property type="match status" value="1"/>
</dbReference>
<dbReference type="FunFam" id="3.20.20.210:FF:000001">
    <property type="entry name" value="Uroporphyrinogen decarboxylase"/>
    <property type="match status" value="1"/>
</dbReference>
<dbReference type="Gene3D" id="3.20.20.210">
    <property type="match status" value="1"/>
</dbReference>
<dbReference type="HAMAP" id="MF_00218">
    <property type="entry name" value="URO_D"/>
    <property type="match status" value="1"/>
</dbReference>
<dbReference type="InterPro" id="IPR038071">
    <property type="entry name" value="UROD/MetE-like_sf"/>
</dbReference>
<dbReference type="InterPro" id="IPR006361">
    <property type="entry name" value="Uroporphyrinogen_deCO2ase_HemE"/>
</dbReference>
<dbReference type="InterPro" id="IPR000257">
    <property type="entry name" value="Uroporphyrinogen_deCOase"/>
</dbReference>
<dbReference type="NCBIfam" id="TIGR01464">
    <property type="entry name" value="hemE"/>
    <property type="match status" value="1"/>
</dbReference>
<dbReference type="PANTHER" id="PTHR21091">
    <property type="entry name" value="METHYLTETRAHYDROFOLATE:HOMOCYSTEINE METHYLTRANSFERASE RELATED"/>
    <property type="match status" value="1"/>
</dbReference>
<dbReference type="PANTHER" id="PTHR21091:SF169">
    <property type="entry name" value="UROPORPHYRINOGEN DECARBOXYLASE"/>
    <property type="match status" value="1"/>
</dbReference>
<dbReference type="Pfam" id="PF01208">
    <property type="entry name" value="URO-D"/>
    <property type="match status" value="1"/>
</dbReference>
<dbReference type="SUPFAM" id="SSF51726">
    <property type="entry name" value="UROD/MetE-like"/>
    <property type="match status" value="1"/>
</dbReference>
<dbReference type="PROSITE" id="PS00906">
    <property type="entry name" value="UROD_1"/>
    <property type="match status" value="1"/>
</dbReference>
<dbReference type="PROSITE" id="PS00907">
    <property type="entry name" value="UROD_2"/>
    <property type="match status" value="1"/>
</dbReference>
<name>DCUP_POLNA</name>
<gene>
    <name evidence="1" type="primary">hemE</name>
    <name type="ordered locus">Pnap_0363</name>
</gene>
<accession>A1VJ58</accession>
<keyword id="KW-0963">Cytoplasm</keyword>
<keyword id="KW-0210">Decarboxylase</keyword>
<keyword id="KW-0456">Lyase</keyword>
<keyword id="KW-0627">Porphyrin biosynthesis</keyword>
<keyword id="KW-1185">Reference proteome</keyword>